<accession>Q9CYQ5</accession>
<dbReference type="EMBL" id="BC079865">
    <property type="protein sequence ID" value="AAH79865.1"/>
    <property type="molecule type" value="mRNA"/>
</dbReference>
<dbReference type="EMBL" id="AK013438">
    <property type="protein sequence ID" value="BAB28855.1"/>
    <property type="molecule type" value="mRNA"/>
</dbReference>
<dbReference type="CCDS" id="CCDS28455.1"/>
<dbReference type="RefSeq" id="NP_001401309.1">
    <property type="nucleotide sequence ID" value="NM_001414380.1"/>
</dbReference>
<dbReference type="RefSeq" id="NP_001401310.1">
    <property type="nucleotide sequence ID" value="NM_001414381.1"/>
</dbReference>
<dbReference type="RefSeq" id="NP_861542.1">
    <property type="nucleotide sequence ID" value="NM_181821.3"/>
</dbReference>
<dbReference type="FunCoup" id="Q9CYQ5">
    <property type="interactions" value="362"/>
</dbReference>
<dbReference type="STRING" id="10090.ENSMUSP00000024697"/>
<dbReference type="PhosphoSitePlus" id="Q9CYQ5"/>
<dbReference type="PaxDb" id="10090-ENSMUSP00000024697"/>
<dbReference type="ProteomicsDB" id="273315"/>
<dbReference type="Antibodypedia" id="42633">
    <property type="antibodies" value="96 antibodies from 14 providers"/>
</dbReference>
<dbReference type="DNASU" id="353502"/>
<dbReference type="Ensembl" id="ENSMUST00000024697.5">
    <property type="protein sequence ID" value="ENSMUSP00000024697.5"/>
    <property type="gene ID" value="ENSMUSG00000023904.11"/>
</dbReference>
<dbReference type="Ensembl" id="ENSMUST00000180140.8">
    <property type="protein sequence ID" value="ENSMUSP00000137336.2"/>
    <property type="gene ID" value="ENSMUSG00000023904.11"/>
</dbReference>
<dbReference type="GeneID" id="353502"/>
<dbReference type="KEGG" id="mmu:353502"/>
<dbReference type="UCSC" id="uc008asu.1">
    <property type="organism name" value="mouse"/>
</dbReference>
<dbReference type="AGR" id="MGI:2663619"/>
<dbReference type="CTD" id="54985"/>
<dbReference type="MGI" id="MGI:2663619">
    <property type="gene designation" value="Hcfc1r1"/>
</dbReference>
<dbReference type="VEuPathDB" id="HostDB:ENSMUSG00000023904"/>
<dbReference type="eggNOG" id="ENOG502SWHU">
    <property type="taxonomic scope" value="Eukaryota"/>
</dbReference>
<dbReference type="GeneTree" id="ENSGT00390000015785"/>
<dbReference type="InParanoid" id="Q9CYQ5"/>
<dbReference type="OMA" id="EDNMATH"/>
<dbReference type="OrthoDB" id="9437224at2759"/>
<dbReference type="PhylomeDB" id="Q9CYQ5"/>
<dbReference type="TreeFam" id="TF338381"/>
<dbReference type="BioGRID-ORCS" id="353502">
    <property type="hits" value="4 hits in 76 CRISPR screens"/>
</dbReference>
<dbReference type="ChiTaRS" id="Hcfc1r1">
    <property type="organism name" value="mouse"/>
</dbReference>
<dbReference type="PRO" id="PR:Q9CYQ5"/>
<dbReference type="Proteomes" id="UP000000589">
    <property type="component" value="Chromosome 17"/>
</dbReference>
<dbReference type="RNAct" id="Q9CYQ5">
    <property type="molecule type" value="protein"/>
</dbReference>
<dbReference type="Bgee" id="ENSMUSG00000023904">
    <property type="expression patterns" value="Expressed in aorta tunica media and 266 other cell types or tissues"/>
</dbReference>
<dbReference type="ExpressionAtlas" id="Q9CYQ5">
    <property type="expression patterns" value="baseline and differential"/>
</dbReference>
<dbReference type="GO" id="GO:0005737">
    <property type="term" value="C:cytoplasm"/>
    <property type="evidence" value="ECO:0007669"/>
    <property type="project" value="UniProtKB-SubCell"/>
</dbReference>
<dbReference type="GO" id="GO:0005654">
    <property type="term" value="C:nucleoplasm"/>
    <property type="evidence" value="ECO:0007669"/>
    <property type="project" value="Ensembl"/>
</dbReference>
<dbReference type="InterPro" id="IPR029195">
    <property type="entry name" value="HCFC1R1"/>
</dbReference>
<dbReference type="PANTHER" id="PTHR16246">
    <property type="entry name" value="HOST CELL FACTOR C1 REGULATOR 1"/>
    <property type="match status" value="1"/>
</dbReference>
<dbReference type="PANTHER" id="PTHR16246:SF2">
    <property type="entry name" value="HOST CELL FACTOR C1 REGULATOR 1"/>
    <property type="match status" value="1"/>
</dbReference>
<dbReference type="Pfam" id="PF15226">
    <property type="entry name" value="HPIP"/>
    <property type="match status" value="1"/>
</dbReference>
<sequence>MILQQPLERGPPSRDPRATTGVTRGLNASLSPREPLHKQFLSEENMATHFSRLSLHNDHPYCSPPVTFPEALPPLRSPCPELLLWRYPGSLIPEALRLLRLGDTPSPYYPASPAGDIVEL</sequence>
<organism>
    <name type="scientific">Mus musculus</name>
    <name type="common">Mouse</name>
    <dbReference type="NCBI Taxonomy" id="10090"/>
    <lineage>
        <taxon>Eukaryota</taxon>
        <taxon>Metazoa</taxon>
        <taxon>Chordata</taxon>
        <taxon>Craniata</taxon>
        <taxon>Vertebrata</taxon>
        <taxon>Euteleostomi</taxon>
        <taxon>Mammalia</taxon>
        <taxon>Eutheria</taxon>
        <taxon>Euarchontoglires</taxon>
        <taxon>Glires</taxon>
        <taxon>Rodentia</taxon>
        <taxon>Myomorpha</taxon>
        <taxon>Muroidea</taxon>
        <taxon>Muridae</taxon>
        <taxon>Murinae</taxon>
        <taxon>Mus</taxon>
        <taxon>Mus</taxon>
    </lineage>
</organism>
<keyword id="KW-0963">Cytoplasm</keyword>
<keyword id="KW-0539">Nucleus</keyword>
<keyword id="KW-1185">Reference proteome</keyword>
<gene>
    <name type="primary">Hcfc1r1</name>
    <name type="synonym">Hpip</name>
</gene>
<reference key="1">
    <citation type="journal article" date="2005" name="Science">
        <title>The transcriptional landscape of the mammalian genome.</title>
        <authorList>
            <person name="Carninci P."/>
            <person name="Kasukawa T."/>
            <person name="Katayama S."/>
            <person name="Gough J."/>
            <person name="Frith M.C."/>
            <person name="Maeda N."/>
            <person name="Oyama R."/>
            <person name="Ravasi T."/>
            <person name="Lenhard B."/>
            <person name="Wells C."/>
            <person name="Kodzius R."/>
            <person name="Shimokawa K."/>
            <person name="Bajic V.B."/>
            <person name="Brenner S.E."/>
            <person name="Batalov S."/>
            <person name="Forrest A.R."/>
            <person name="Zavolan M."/>
            <person name="Davis M.J."/>
            <person name="Wilming L.G."/>
            <person name="Aidinis V."/>
            <person name="Allen J.E."/>
            <person name="Ambesi-Impiombato A."/>
            <person name="Apweiler R."/>
            <person name="Aturaliya R.N."/>
            <person name="Bailey T.L."/>
            <person name="Bansal M."/>
            <person name="Baxter L."/>
            <person name="Beisel K.W."/>
            <person name="Bersano T."/>
            <person name="Bono H."/>
            <person name="Chalk A.M."/>
            <person name="Chiu K.P."/>
            <person name="Choudhary V."/>
            <person name="Christoffels A."/>
            <person name="Clutterbuck D.R."/>
            <person name="Crowe M.L."/>
            <person name="Dalla E."/>
            <person name="Dalrymple B.P."/>
            <person name="de Bono B."/>
            <person name="Della Gatta G."/>
            <person name="di Bernardo D."/>
            <person name="Down T."/>
            <person name="Engstrom P."/>
            <person name="Fagiolini M."/>
            <person name="Faulkner G."/>
            <person name="Fletcher C.F."/>
            <person name="Fukushima T."/>
            <person name="Furuno M."/>
            <person name="Futaki S."/>
            <person name="Gariboldi M."/>
            <person name="Georgii-Hemming P."/>
            <person name="Gingeras T.R."/>
            <person name="Gojobori T."/>
            <person name="Green R.E."/>
            <person name="Gustincich S."/>
            <person name="Harbers M."/>
            <person name="Hayashi Y."/>
            <person name="Hensch T.K."/>
            <person name="Hirokawa N."/>
            <person name="Hill D."/>
            <person name="Huminiecki L."/>
            <person name="Iacono M."/>
            <person name="Ikeo K."/>
            <person name="Iwama A."/>
            <person name="Ishikawa T."/>
            <person name="Jakt M."/>
            <person name="Kanapin A."/>
            <person name="Katoh M."/>
            <person name="Kawasawa Y."/>
            <person name="Kelso J."/>
            <person name="Kitamura H."/>
            <person name="Kitano H."/>
            <person name="Kollias G."/>
            <person name="Krishnan S.P."/>
            <person name="Kruger A."/>
            <person name="Kummerfeld S.K."/>
            <person name="Kurochkin I.V."/>
            <person name="Lareau L.F."/>
            <person name="Lazarevic D."/>
            <person name="Lipovich L."/>
            <person name="Liu J."/>
            <person name="Liuni S."/>
            <person name="McWilliam S."/>
            <person name="Madan Babu M."/>
            <person name="Madera M."/>
            <person name="Marchionni L."/>
            <person name="Matsuda H."/>
            <person name="Matsuzawa S."/>
            <person name="Miki H."/>
            <person name="Mignone F."/>
            <person name="Miyake S."/>
            <person name="Morris K."/>
            <person name="Mottagui-Tabar S."/>
            <person name="Mulder N."/>
            <person name="Nakano N."/>
            <person name="Nakauchi H."/>
            <person name="Ng P."/>
            <person name="Nilsson R."/>
            <person name="Nishiguchi S."/>
            <person name="Nishikawa S."/>
            <person name="Nori F."/>
            <person name="Ohara O."/>
            <person name="Okazaki Y."/>
            <person name="Orlando V."/>
            <person name="Pang K.C."/>
            <person name="Pavan W.J."/>
            <person name="Pavesi G."/>
            <person name="Pesole G."/>
            <person name="Petrovsky N."/>
            <person name="Piazza S."/>
            <person name="Reed J."/>
            <person name="Reid J.F."/>
            <person name="Ring B.Z."/>
            <person name="Ringwald M."/>
            <person name="Rost B."/>
            <person name="Ruan Y."/>
            <person name="Salzberg S.L."/>
            <person name="Sandelin A."/>
            <person name="Schneider C."/>
            <person name="Schoenbach C."/>
            <person name="Sekiguchi K."/>
            <person name="Semple C.A."/>
            <person name="Seno S."/>
            <person name="Sessa L."/>
            <person name="Sheng Y."/>
            <person name="Shibata Y."/>
            <person name="Shimada H."/>
            <person name="Shimada K."/>
            <person name="Silva D."/>
            <person name="Sinclair B."/>
            <person name="Sperling S."/>
            <person name="Stupka E."/>
            <person name="Sugiura K."/>
            <person name="Sultana R."/>
            <person name="Takenaka Y."/>
            <person name="Taki K."/>
            <person name="Tammoja K."/>
            <person name="Tan S.L."/>
            <person name="Tang S."/>
            <person name="Taylor M.S."/>
            <person name="Tegner J."/>
            <person name="Teichmann S.A."/>
            <person name="Ueda H.R."/>
            <person name="van Nimwegen E."/>
            <person name="Verardo R."/>
            <person name="Wei C.L."/>
            <person name="Yagi K."/>
            <person name="Yamanishi H."/>
            <person name="Zabarovsky E."/>
            <person name="Zhu S."/>
            <person name="Zimmer A."/>
            <person name="Hide W."/>
            <person name="Bult C."/>
            <person name="Grimmond S.M."/>
            <person name="Teasdale R.D."/>
            <person name="Liu E.T."/>
            <person name="Brusic V."/>
            <person name="Quackenbush J."/>
            <person name="Wahlestedt C."/>
            <person name="Mattick J.S."/>
            <person name="Hume D.A."/>
            <person name="Kai C."/>
            <person name="Sasaki D."/>
            <person name="Tomaru Y."/>
            <person name="Fukuda S."/>
            <person name="Kanamori-Katayama M."/>
            <person name="Suzuki M."/>
            <person name="Aoki J."/>
            <person name="Arakawa T."/>
            <person name="Iida J."/>
            <person name="Imamura K."/>
            <person name="Itoh M."/>
            <person name="Kato T."/>
            <person name="Kawaji H."/>
            <person name="Kawagashira N."/>
            <person name="Kawashima T."/>
            <person name="Kojima M."/>
            <person name="Kondo S."/>
            <person name="Konno H."/>
            <person name="Nakano K."/>
            <person name="Ninomiya N."/>
            <person name="Nishio T."/>
            <person name="Okada M."/>
            <person name="Plessy C."/>
            <person name="Shibata K."/>
            <person name="Shiraki T."/>
            <person name="Suzuki S."/>
            <person name="Tagami M."/>
            <person name="Waki K."/>
            <person name="Watahiki A."/>
            <person name="Okamura-Oho Y."/>
            <person name="Suzuki H."/>
            <person name="Kawai J."/>
            <person name="Hayashizaki Y."/>
        </authorList>
    </citation>
    <scope>NUCLEOTIDE SEQUENCE [LARGE SCALE MRNA]</scope>
    <source>
        <strain>C57BL/6J</strain>
    </source>
</reference>
<reference key="2">
    <citation type="journal article" date="2004" name="Genome Res.">
        <title>The status, quality, and expansion of the NIH full-length cDNA project: the Mammalian Gene Collection (MGC).</title>
        <authorList>
            <consortium name="The MGC Project Team"/>
        </authorList>
    </citation>
    <scope>NUCLEOTIDE SEQUENCE [LARGE SCALE MRNA]</scope>
    <source>
        <strain>C57BL/6J</strain>
        <tissue>Brain</tissue>
    </source>
</reference>
<feature type="chain" id="PRO_0000338979" description="Host cell factor C1 regulator 1">
    <location>
        <begin position="1"/>
        <end position="120"/>
    </location>
</feature>
<feature type="region of interest" description="Disordered" evidence="2">
    <location>
        <begin position="1"/>
        <end position="30"/>
    </location>
</feature>
<feature type="region of interest" description="Interaction with HCFC1" evidence="1">
    <location>
        <begin position="58"/>
        <end position="61"/>
    </location>
</feature>
<feature type="short sequence motif" description="Nuclear export signal" evidence="1">
    <location>
        <begin position="92"/>
        <end position="101"/>
    </location>
</feature>
<feature type="compositionally biased region" description="Polar residues" evidence="2">
    <location>
        <begin position="20"/>
        <end position="30"/>
    </location>
</feature>
<protein>
    <recommendedName>
        <fullName>Host cell factor C1 regulator 1</fullName>
    </recommendedName>
    <alternativeName>
        <fullName>HCF-1 beta-propeller-interacting protein</fullName>
    </alternativeName>
</protein>
<proteinExistence type="evidence at transcript level"/>
<comment type="function">
    <text evidence="1">Regulates HCFC1 activity by modulating its subcellular localization. Overexpression of HCFC1R1 leads to accumulation of HCFC1 in the cytoplasm. HCFC1R1-mediated export may provide the pool of cytoplasmic HCFC1 required for import of virion-derived VP16 into the nucleus (By similarity).</text>
</comment>
<comment type="subunit">
    <text evidence="1">Interacts with HCFC1.</text>
</comment>
<comment type="subcellular location">
    <subcellularLocation>
        <location evidence="1">Cytoplasm</location>
    </subcellularLocation>
    <subcellularLocation>
        <location evidence="1">Nucleus</location>
    </subcellularLocation>
    <text evidence="1">Shuttles between the nucleus and cytoplasm in a CRM1-dependent manner.</text>
</comment>
<name>HPIP_MOUSE</name>
<evidence type="ECO:0000250" key="1"/>
<evidence type="ECO:0000256" key="2">
    <source>
        <dbReference type="SAM" id="MobiDB-lite"/>
    </source>
</evidence>